<name>IF1_STAAC</name>
<reference key="1">
    <citation type="journal article" date="2005" name="J. Bacteriol.">
        <title>Insights on evolution of virulence and resistance from the complete genome analysis of an early methicillin-resistant Staphylococcus aureus strain and a biofilm-producing methicillin-resistant Staphylococcus epidermidis strain.</title>
        <authorList>
            <person name="Gill S.R."/>
            <person name="Fouts D.E."/>
            <person name="Archer G.L."/>
            <person name="Mongodin E.F."/>
            <person name="DeBoy R.T."/>
            <person name="Ravel J."/>
            <person name="Paulsen I.T."/>
            <person name="Kolonay J.F."/>
            <person name="Brinkac L.M."/>
            <person name="Beanan M.J."/>
            <person name="Dodson R.J."/>
            <person name="Daugherty S.C."/>
            <person name="Madupu R."/>
            <person name="Angiuoli S.V."/>
            <person name="Durkin A.S."/>
            <person name="Haft D.H."/>
            <person name="Vamathevan J.J."/>
            <person name="Khouri H."/>
            <person name="Utterback T.R."/>
            <person name="Lee C."/>
            <person name="Dimitrov G."/>
            <person name="Jiang L."/>
            <person name="Qin H."/>
            <person name="Weidman J."/>
            <person name="Tran K."/>
            <person name="Kang K.H."/>
            <person name="Hance I.R."/>
            <person name="Nelson K.E."/>
            <person name="Fraser C.M."/>
        </authorList>
    </citation>
    <scope>NUCLEOTIDE SEQUENCE [LARGE SCALE GENOMIC DNA]</scope>
    <source>
        <strain>COL</strain>
    </source>
</reference>
<dbReference type="EMBL" id="CP000046">
    <property type="protein sequence ID" value="AAW37092.1"/>
    <property type="molecule type" value="Genomic_DNA"/>
</dbReference>
<dbReference type="RefSeq" id="WP_001118443.1">
    <property type="nucleotide sequence ID" value="NZ_JBGOFO010000004.1"/>
</dbReference>
<dbReference type="SMR" id="Q5HDY0"/>
<dbReference type="GeneID" id="98346540"/>
<dbReference type="KEGG" id="sac:SACOL2217"/>
<dbReference type="HOGENOM" id="CLU_151267_1_0_9"/>
<dbReference type="Proteomes" id="UP000000530">
    <property type="component" value="Chromosome"/>
</dbReference>
<dbReference type="GO" id="GO:0005829">
    <property type="term" value="C:cytosol"/>
    <property type="evidence" value="ECO:0007669"/>
    <property type="project" value="TreeGrafter"/>
</dbReference>
<dbReference type="GO" id="GO:0043022">
    <property type="term" value="F:ribosome binding"/>
    <property type="evidence" value="ECO:0007669"/>
    <property type="project" value="UniProtKB-UniRule"/>
</dbReference>
<dbReference type="GO" id="GO:0019843">
    <property type="term" value="F:rRNA binding"/>
    <property type="evidence" value="ECO:0007669"/>
    <property type="project" value="UniProtKB-UniRule"/>
</dbReference>
<dbReference type="GO" id="GO:0003743">
    <property type="term" value="F:translation initiation factor activity"/>
    <property type="evidence" value="ECO:0007669"/>
    <property type="project" value="UniProtKB-UniRule"/>
</dbReference>
<dbReference type="CDD" id="cd04451">
    <property type="entry name" value="S1_IF1"/>
    <property type="match status" value="1"/>
</dbReference>
<dbReference type="FunFam" id="2.40.50.140:FF:000002">
    <property type="entry name" value="Translation initiation factor IF-1"/>
    <property type="match status" value="1"/>
</dbReference>
<dbReference type="Gene3D" id="2.40.50.140">
    <property type="entry name" value="Nucleic acid-binding proteins"/>
    <property type="match status" value="1"/>
</dbReference>
<dbReference type="HAMAP" id="MF_00075">
    <property type="entry name" value="IF_1"/>
    <property type="match status" value="1"/>
</dbReference>
<dbReference type="InterPro" id="IPR012340">
    <property type="entry name" value="NA-bd_OB-fold"/>
</dbReference>
<dbReference type="InterPro" id="IPR006196">
    <property type="entry name" value="RNA-binding_domain_S1_IF1"/>
</dbReference>
<dbReference type="InterPro" id="IPR003029">
    <property type="entry name" value="S1_domain"/>
</dbReference>
<dbReference type="InterPro" id="IPR004368">
    <property type="entry name" value="TIF_IF1"/>
</dbReference>
<dbReference type="NCBIfam" id="TIGR00008">
    <property type="entry name" value="infA"/>
    <property type="match status" value="1"/>
</dbReference>
<dbReference type="PANTHER" id="PTHR33370">
    <property type="entry name" value="TRANSLATION INITIATION FACTOR IF-1, CHLOROPLASTIC"/>
    <property type="match status" value="1"/>
</dbReference>
<dbReference type="PANTHER" id="PTHR33370:SF1">
    <property type="entry name" value="TRANSLATION INITIATION FACTOR IF-1, CHLOROPLASTIC"/>
    <property type="match status" value="1"/>
</dbReference>
<dbReference type="Pfam" id="PF01176">
    <property type="entry name" value="eIF-1a"/>
    <property type="match status" value="1"/>
</dbReference>
<dbReference type="SMART" id="SM00316">
    <property type="entry name" value="S1"/>
    <property type="match status" value="1"/>
</dbReference>
<dbReference type="SUPFAM" id="SSF50249">
    <property type="entry name" value="Nucleic acid-binding proteins"/>
    <property type="match status" value="1"/>
</dbReference>
<dbReference type="PROSITE" id="PS50832">
    <property type="entry name" value="S1_IF1_TYPE"/>
    <property type="match status" value="1"/>
</dbReference>
<sequence>MAKQDVIELEGTVLDTLPNAMFKVELENGHEILAHVSGKIRMNYIRILPGDKVTVEMSPYDLTRGRITYRYK</sequence>
<organism>
    <name type="scientific">Staphylococcus aureus (strain COL)</name>
    <dbReference type="NCBI Taxonomy" id="93062"/>
    <lineage>
        <taxon>Bacteria</taxon>
        <taxon>Bacillati</taxon>
        <taxon>Bacillota</taxon>
        <taxon>Bacilli</taxon>
        <taxon>Bacillales</taxon>
        <taxon>Staphylococcaceae</taxon>
        <taxon>Staphylococcus</taxon>
    </lineage>
</organism>
<comment type="function">
    <text evidence="1">One of the essential components for the initiation of protein synthesis. Stabilizes the binding of IF-2 and IF-3 on the 30S subunit to which N-formylmethionyl-tRNA(fMet) subsequently binds. Helps modulate mRNA selection, yielding the 30S pre-initiation complex (PIC). Upon addition of the 50S ribosomal subunit IF-1, IF-2 and IF-3 are released leaving the mature 70S translation initiation complex.</text>
</comment>
<comment type="subunit">
    <text evidence="1">Component of the 30S ribosomal translation pre-initiation complex which assembles on the 30S ribosome in the order IF-2 and IF-3, IF-1 and N-formylmethionyl-tRNA(fMet); mRNA recruitment can occur at any time during PIC assembly.</text>
</comment>
<comment type="subcellular location">
    <subcellularLocation>
        <location evidence="1">Cytoplasm</location>
    </subcellularLocation>
</comment>
<comment type="similarity">
    <text evidence="1">Belongs to the IF-1 family.</text>
</comment>
<gene>
    <name evidence="1" type="primary">infA</name>
    <name type="ordered locus">SACOL2217</name>
</gene>
<proteinExistence type="inferred from homology"/>
<protein>
    <recommendedName>
        <fullName evidence="1">Translation initiation factor IF-1</fullName>
    </recommendedName>
</protein>
<accession>Q5HDY0</accession>
<keyword id="KW-0963">Cytoplasm</keyword>
<keyword id="KW-0396">Initiation factor</keyword>
<keyword id="KW-0648">Protein biosynthesis</keyword>
<keyword id="KW-0694">RNA-binding</keyword>
<keyword id="KW-0699">rRNA-binding</keyword>
<evidence type="ECO:0000255" key="1">
    <source>
        <dbReference type="HAMAP-Rule" id="MF_00075"/>
    </source>
</evidence>
<feature type="chain" id="PRO_0000095865" description="Translation initiation factor IF-1">
    <location>
        <begin position="1"/>
        <end position="72"/>
    </location>
</feature>
<feature type="domain" description="S1-like" evidence="1">
    <location>
        <begin position="1"/>
        <end position="72"/>
    </location>
</feature>